<evidence type="ECO:0000250" key="1"/>
<evidence type="ECO:0000250" key="2">
    <source>
        <dbReference type="UniProtKB" id="O66962"/>
    </source>
</evidence>
<evidence type="ECO:0000250" key="3">
    <source>
        <dbReference type="UniProtKB" id="Q9Y2Z2"/>
    </source>
</evidence>
<evidence type="ECO:0000255" key="4"/>
<evidence type="ECO:0000256" key="5">
    <source>
        <dbReference type="SAM" id="MobiDB-lite"/>
    </source>
</evidence>
<evidence type="ECO:0000305" key="6"/>
<organism>
    <name type="scientific">Macaca fascicularis</name>
    <name type="common">Crab-eating macaque</name>
    <name type="synonym">Cynomolgus monkey</name>
    <dbReference type="NCBI Taxonomy" id="9541"/>
    <lineage>
        <taxon>Eukaryota</taxon>
        <taxon>Metazoa</taxon>
        <taxon>Chordata</taxon>
        <taxon>Craniata</taxon>
        <taxon>Vertebrata</taxon>
        <taxon>Euteleostomi</taxon>
        <taxon>Mammalia</taxon>
        <taxon>Eutheria</taxon>
        <taxon>Euarchontoglires</taxon>
        <taxon>Primates</taxon>
        <taxon>Haplorrhini</taxon>
        <taxon>Catarrhini</taxon>
        <taxon>Cercopithecidae</taxon>
        <taxon>Cercopithecinae</taxon>
        <taxon>Macaca</taxon>
    </lineage>
</organism>
<reference key="1">
    <citation type="submission" date="2005-06" db="EMBL/GenBank/DDBJ databases">
        <title>DNA sequences of macaque genes expressed in brain or testis and its evolutionary implications.</title>
        <authorList>
            <consortium name="International consortium for macaque cDNA sequencing and analysis"/>
        </authorList>
    </citation>
    <scope>NUCLEOTIDE SEQUENCE [LARGE SCALE MRNA]</scope>
    <source>
        <tissue>Temporal cortex</tissue>
    </source>
</reference>
<feature type="transit peptide" description="Mitochondrion" evidence="4">
    <location>
        <begin position="1"/>
        <end position="25"/>
    </location>
</feature>
<feature type="chain" id="PRO_0000042689" description="5-taurinomethyluridine-[tRNA] synthase subunit MTO1, mitochondrial">
    <location>
        <begin position="26"/>
        <end position="692"/>
    </location>
</feature>
<feature type="region of interest" description="Disordered" evidence="5">
    <location>
        <begin position="669"/>
        <end position="692"/>
    </location>
</feature>
<feature type="compositionally biased region" description="Basic and acidic residues" evidence="5">
    <location>
        <begin position="683"/>
        <end position="692"/>
    </location>
</feature>
<feature type="binding site" evidence="2">
    <location>
        <begin position="43"/>
        <end position="48"/>
    </location>
    <ligand>
        <name>FAD</name>
        <dbReference type="ChEBI" id="CHEBI:57692"/>
    </ligand>
</feature>
<feature type="binding site" evidence="2">
    <location>
        <position position="155"/>
    </location>
    <ligand>
        <name>FAD</name>
        <dbReference type="ChEBI" id="CHEBI:57692"/>
    </ligand>
</feature>
<feature type="binding site" evidence="2">
    <location>
        <position position="218"/>
    </location>
    <ligand>
        <name>FAD</name>
        <dbReference type="ChEBI" id="CHEBI:57692"/>
    </ligand>
</feature>
<feature type="binding site" evidence="2">
    <location>
        <position position="407"/>
    </location>
    <ligand>
        <name>FAD</name>
        <dbReference type="ChEBI" id="CHEBI:57692"/>
    </ligand>
</feature>
<feature type="modified residue" description="N6-methyllysine" evidence="3">
    <location>
        <position position="508"/>
    </location>
</feature>
<gene>
    <name type="primary">MTO1</name>
    <name type="ORF">QtrA-12602</name>
</gene>
<dbReference type="EMBL" id="AB169848">
    <property type="protein sequence ID" value="BAE01929.1"/>
    <property type="molecule type" value="mRNA"/>
</dbReference>
<dbReference type="RefSeq" id="NP_001306461.1">
    <property type="nucleotide sequence ID" value="NM_001319532.1"/>
</dbReference>
<dbReference type="RefSeq" id="XP_015304667.1">
    <property type="nucleotide sequence ID" value="XM_015449181.1"/>
</dbReference>
<dbReference type="RefSeq" id="XP_045247074.1">
    <property type="nucleotide sequence ID" value="XM_045391139.2"/>
</dbReference>
<dbReference type="SMR" id="Q4R4P6"/>
<dbReference type="STRING" id="9541.ENSMFAP00000030699"/>
<dbReference type="GeneID" id="107129530"/>
<dbReference type="OrthoDB" id="3329at2759"/>
<dbReference type="Proteomes" id="UP000233100">
    <property type="component" value="Unplaced"/>
</dbReference>
<dbReference type="GO" id="GO:0005829">
    <property type="term" value="C:cytosol"/>
    <property type="evidence" value="ECO:0007669"/>
    <property type="project" value="TreeGrafter"/>
</dbReference>
<dbReference type="GO" id="GO:0005739">
    <property type="term" value="C:mitochondrion"/>
    <property type="evidence" value="ECO:0007669"/>
    <property type="project" value="UniProtKB-SubCell"/>
</dbReference>
<dbReference type="GO" id="GO:0050660">
    <property type="term" value="F:flavin adenine dinucleotide binding"/>
    <property type="evidence" value="ECO:0007669"/>
    <property type="project" value="InterPro"/>
</dbReference>
<dbReference type="GO" id="GO:0160236">
    <property type="term" value="F:tRNA 5-taurinomethyluridine synthase activity"/>
    <property type="evidence" value="ECO:0000250"/>
    <property type="project" value="UniProtKB"/>
</dbReference>
<dbReference type="GO" id="GO:0070899">
    <property type="term" value="P:mitochondrial tRNA wobble uridine modification"/>
    <property type="evidence" value="ECO:0000250"/>
    <property type="project" value="UniProtKB"/>
</dbReference>
<dbReference type="GO" id="GO:0030488">
    <property type="term" value="P:tRNA methylation"/>
    <property type="evidence" value="ECO:0007669"/>
    <property type="project" value="TreeGrafter"/>
</dbReference>
<dbReference type="FunFam" id="3.50.50.60:FF:000082">
    <property type="entry name" value="protein MTO1 homolog, mitochondrial isoform X1"/>
    <property type="match status" value="1"/>
</dbReference>
<dbReference type="FunFam" id="1.10.150.570:FF:000001">
    <property type="entry name" value="tRNA uridine 5-carboxymethylaminomethyl modification enzyme MnmG"/>
    <property type="match status" value="1"/>
</dbReference>
<dbReference type="FunFam" id="3.50.50.60:FF:000002">
    <property type="entry name" value="tRNA uridine 5-carboxymethylaminomethyl modification enzyme MnmG"/>
    <property type="match status" value="1"/>
</dbReference>
<dbReference type="Gene3D" id="3.50.50.60">
    <property type="entry name" value="FAD/NAD(P)-binding domain"/>
    <property type="match status" value="2"/>
</dbReference>
<dbReference type="Gene3D" id="1.10.150.570">
    <property type="entry name" value="GidA associated domain, C-terminal subdomain"/>
    <property type="match status" value="1"/>
</dbReference>
<dbReference type="HAMAP" id="MF_00129">
    <property type="entry name" value="MnmG_GidA"/>
    <property type="match status" value="1"/>
</dbReference>
<dbReference type="InterPro" id="IPR036188">
    <property type="entry name" value="FAD/NAD-bd_sf"/>
</dbReference>
<dbReference type="InterPro" id="IPR049312">
    <property type="entry name" value="GIDA_C_N"/>
</dbReference>
<dbReference type="InterPro" id="IPR004416">
    <property type="entry name" value="MnmG"/>
</dbReference>
<dbReference type="InterPro" id="IPR002218">
    <property type="entry name" value="MnmG-rel"/>
</dbReference>
<dbReference type="InterPro" id="IPR020595">
    <property type="entry name" value="MnmG-rel_CS"/>
</dbReference>
<dbReference type="InterPro" id="IPR026904">
    <property type="entry name" value="MnmG_C"/>
</dbReference>
<dbReference type="InterPro" id="IPR047001">
    <property type="entry name" value="MnmG_C_subdom"/>
</dbReference>
<dbReference type="InterPro" id="IPR044920">
    <property type="entry name" value="MnmG_C_subdom_sf"/>
</dbReference>
<dbReference type="InterPro" id="IPR040131">
    <property type="entry name" value="MnmG_N"/>
</dbReference>
<dbReference type="NCBIfam" id="TIGR00136">
    <property type="entry name" value="mnmG_gidA"/>
    <property type="match status" value="1"/>
</dbReference>
<dbReference type="PANTHER" id="PTHR11806">
    <property type="entry name" value="GLUCOSE INHIBITED DIVISION PROTEIN A"/>
    <property type="match status" value="1"/>
</dbReference>
<dbReference type="PANTHER" id="PTHR11806:SF0">
    <property type="entry name" value="PROTEIN MTO1 HOMOLOG, MITOCHONDRIAL"/>
    <property type="match status" value="1"/>
</dbReference>
<dbReference type="Pfam" id="PF01134">
    <property type="entry name" value="GIDA"/>
    <property type="match status" value="1"/>
</dbReference>
<dbReference type="Pfam" id="PF21680">
    <property type="entry name" value="GIDA_C_1st"/>
    <property type="match status" value="1"/>
</dbReference>
<dbReference type="Pfam" id="PF13932">
    <property type="entry name" value="SAM_GIDA_C"/>
    <property type="match status" value="1"/>
</dbReference>
<dbReference type="PRINTS" id="PR00368">
    <property type="entry name" value="FADPNR"/>
</dbReference>
<dbReference type="PRINTS" id="PR00411">
    <property type="entry name" value="PNDRDTASEI"/>
</dbReference>
<dbReference type="SMART" id="SM01228">
    <property type="entry name" value="GIDA_assoc_3"/>
    <property type="match status" value="1"/>
</dbReference>
<dbReference type="SUPFAM" id="SSF51905">
    <property type="entry name" value="FAD/NAD(P)-binding domain"/>
    <property type="match status" value="1"/>
</dbReference>
<dbReference type="PROSITE" id="PS01280">
    <property type="entry name" value="GIDA_1"/>
    <property type="match status" value="1"/>
</dbReference>
<dbReference type="PROSITE" id="PS01281">
    <property type="entry name" value="GIDA_2"/>
    <property type="match status" value="1"/>
</dbReference>
<comment type="function">
    <text evidence="3">Component of the GTPBP3-MTO1 complex that catalyzes the 5-taurinomethyluridine (taum(5)U) modification at the 34th wobble position (U34) of mitochondrial tRNAs (mt-tRNAs), which plays a role in mt-tRNA decoding and mitochondrial translation. Taum(5)U formation on mammalian mt-tRNA requires the presence of both GTPBP3-mediated GTPase activity and MTO1 catalytic activity.</text>
</comment>
<comment type="catalytic activity">
    <reaction evidence="3">
        <text>5,10-methylenetetrahydrofolate + uridine(34) in tRNA + taurine + GTP + A + H2O = 5-taurinomethyluridine(34) in tRNA + 7,8-dihydrofolate + GDP + AH2 + phosphate + H(+)</text>
        <dbReference type="Rhea" id="RHEA:83279"/>
        <dbReference type="Rhea" id="RHEA-COMP:11727"/>
        <dbReference type="Rhea" id="RHEA-COMP:11732"/>
        <dbReference type="ChEBI" id="CHEBI:12071"/>
        <dbReference type="ChEBI" id="CHEBI:13193"/>
        <dbReference type="ChEBI" id="CHEBI:15377"/>
        <dbReference type="ChEBI" id="CHEBI:15378"/>
        <dbReference type="ChEBI" id="CHEBI:17499"/>
        <dbReference type="ChEBI" id="CHEBI:37565"/>
        <dbReference type="ChEBI" id="CHEBI:43474"/>
        <dbReference type="ChEBI" id="CHEBI:57451"/>
        <dbReference type="ChEBI" id="CHEBI:58189"/>
        <dbReference type="ChEBI" id="CHEBI:65315"/>
        <dbReference type="ChEBI" id="CHEBI:87172"/>
        <dbReference type="ChEBI" id="CHEBI:507393"/>
    </reaction>
    <physiologicalReaction direction="left-to-right" evidence="3">
        <dbReference type="Rhea" id="RHEA:83280"/>
    </physiologicalReaction>
</comment>
<comment type="cofactor">
    <cofactor evidence="2">
        <name>FAD</name>
        <dbReference type="ChEBI" id="CHEBI:57692"/>
    </cofactor>
</comment>
<comment type="subunit">
    <text evidence="3">Homodimer; forms a dimer in the presence of potassium. Interacts with GTPBP3; forms the GTPBP3-MTO1 complex composed of homodimers of GTPBP3 and MTO1.</text>
</comment>
<comment type="subcellular location">
    <subcellularLocation>
        <location evidence="1">Mitochondrion</location>
    </subcellularLocation>
</comment>
<comment type="similarity">
    <text evidence="6">Belongs to the MnmG family.</text>
</comment>
<proteinExistence type="evidence at transcript level"/>
<keyword id="KW-0274">FAD</keyword>
<keyword id="KW-0285">Flavoprotein</keyword>
<keyword id="KW-0488">Methylation</keyword>
<keyword id="KW-0496">Mitochondrion</keyword>
<keyword id="KW-1185">Reference proteome</keyword>
<keyword id="KW-0809">Transit peptide</keyword>
<keyword id="KW-0819">tRNA processing</keyword>
<accession>Q4R4P6</accession>
<protein>
    <recommendedName>
        <fullName evidence="3">5-taurinomethyluridine-[tRNA] synthase subunit MTO1, mitochondrial</fullName>
    </recommendedName>
    <alternativeName>
        <fullName evidence="3">Mitochondrial tRNA translation optimization 1</fullName>
    </alternativeName>
    <alternativeName>
        <fullName evidence="3">Protein MTO1 homolog, mitochondrial</fullName>
    </alternativeName>
</protein>
<sequence>MFYLRGCGRWVAASFTKQQFPLVRLSSDSAAPRTPHFDVIVIGGGHAGTEAATAAARCGSRTLLLTHRVDTIGQMSCNPSFGGIGKGHLMREVDALDGLCSRICDQSGVHYKVLNRRKGPAVWGLRAQIDRKLYKQNMQKEILNTPLLTVQEGAVEDLILTEPEPEHTGKCRVSGVVLVDGSTVYAESVILTTGTFLRGMIVIGLEMHPAGRLGDQPSIGLAQTLEKLGFVVGRLKTGTPPRIAKDSINFSILNKQTPDNPSVPFSFTNETVWIKPEDQLPCYLTYTNPRVDEIVLNNLHLNSHVKETTRGPRYCPSIESKVLRFPNRLHQVWLEPEGMDSDLIYPQGLSMTLPTELQEKMITCIRGLEKAKVIQPGYGVQYDYLDPRQITPSLETHLVQRLFFAGQINGTTGYEEAAAQGVIAGINASLRVSRKPPFVVSRTEGYIGVLIDDLTTLGTSEPYRMFTSRVEFRLSLRPDNADIRLTLRGYKDAGCVSQQRYERACWMKSSLEEGISVLKSIEFSSSKWKNLIPEVSISTSRSLPVRALDVLKYEEVDMDSLAKAVPEPLKKYTKCRELAERLKIEATYESVLFHQLQEIKGVQQDEALQLPKDIDYLTIRDVSLSHEVREKLHFSRPQTIGAASRIPGVTPAAIINLLRFVKTTQQRQAAMNESPKTDQCLRNADRLQERQL</sequence>
<name>MTO1_MACFA</name>